<evidence type="ECO:0000255" key="1">
    <source>
        <dbReference type="HAMAP-Rule" id="MF_00278"/>
    </source>
</evidence>
<reference key="1">
    <citation type="submission" date="2008-10" db="EMBL/GenBank/DDBJ databases">
        <title>Genome sequence of Bacillus anthracis str. CDC 684.</title>
        <authorList>
            <person name="Dodson R.J."/>
            <person name="Munk A.C."/>
            <person name="Brettin T."/>
            <person name="Bruce D."/>
            <person name="Detter C."/>
            <person name="Tapia R."/>
            <person name="Han C."/>
            <person name="Sutton G."/>
            <person name="Sims D."/>
        </authorList>
    </citation>
    <scope>NUCLEOTIDE SEQUENCE [LARGE SCALE GENOMIC DNA]</scope>
    <source>
        <strain>CDC 684 / NRRL 3495</strain>
    </source>
</reference>
<dbReference type="EC" id="4.3.2.10" evidence="1"/>
<dbReference type="EC" id="3.5.1.2" evidence="1"/>
<dbReference type="EMBL" id="CP001215">
    <property type="protein sequence ID" value="ACP16059.1"/>
    <property type="molecule type" value="Genomic_DNA"/>
</dbReference>
<dbReference type="RefSeq" id="WP_000560340.1">
    <property type="nucleotide sequence ID" value="NC_012581.1"/>
</dbReference>
<dbReference type="SMR" id="C3L9P9"/>
<dbReference type="KEGG" id="bah:BAMEG_3167"/>
<dbReference type="HOGENOM" id="CLU_071837_2_2_9"/>
<dbReference type="UniPathway" id="UPA00031">
    <property type="reaction ID" value="UER00010"/>
</dbReference>
<dbReference type="GO" id="GO:0005737">
    <property type="term" value="C:cytoplasm"/>
    <property type="evidence" value="ECO:0007669"/>
    <property type="project" value="UniProtKB-SubCell"/>
</dbReference>
<dbReference type="GO" id="GO:0004359">
    <property type="term" value="F:glutaminase activity"/>
    <property type="evidence" value="ECO:0007669"/>
    <property type="project" value="UniProtKB-EC"/>
</dbReference>
<dbReference type="GO" id="GO:0000107">
    <property type="term" value="F:imidazoleglycerol-phosphate synthase activity"/>
    <property type="evidence" value="ECO:0007669"/>
    <property type="project" value="UniProtKB-UniRule"/>
</dbReference>
<dbReference type="GO" id="GO:0016829">
    <property type="term" value="F:lyase activity"/>
    <property type="evidence" value="ECO:0007669"/>
    <property type="project" value="UniProtKB-KW"/>
</dbReference>
<dbReference type="GO" id="GO:0000105">
    <property type="term" value="P:L-histidine biosynthetic process"/>
    <property type="evidence" value="ECO:0007669"/>
    <property type="project" value="UniProtKB-UniRule"/>
</dbReference>
<dbReference type="CDD" id="cd01748">
    <property type="entry name" value="GATase1_IGP_Synthase"/>
    <property type="match status" value="1"/>
</dbReference>
<dbReference type="FunFam" id="3.40.50.880:FF:000028">
    <property type="entry name" value="Imidazole glycerol phosphate synthase subunit HisH"/>
    <property type="match status" value="1"/>
</dbReference>
<dbReference type="Gene3D" id="3.40.50.880">
    <property type="match status" value="1"/>
</dbReference>
<dbReference type="HAMAP" id="MF_00278">
    <property type="entry name" value="HisH"/>
    <property type="match status" value="1"/>
</dbReference>
<dbReference type="InterPro" id="IPR029062">
    <property type="entry name" value="Class_I_gatase-like"/>
</dbReference>
<dbReference type="InterPro" id="IPR017926">
    <property type="entry name" value="GATASE"/>
</dbReference>
<dbReference type="InterPro" id="IPR010139">
    <property type="entry name" value="Imidazole-glycPsynth_HisH"/>
</dbReference>
<dbReference type="NCBIfam" id="TIGR01855">
    <property type="entry name" value="IMP_synth_hisH"/>
    <property type="match status" value="1"/>
</dbReference>
<dbReference type="PANTHER" id="PTHR42701">
    <property type="entry name" value="IMIDAZOLE GLYCEROL PHOSPHATE SYNTHASE SUBUNIT HISH"/>
    <property type="match status" value="1"/>
</dbReference>
<dbReference type="PANTHER" id="PTHR42701:SF1">
    <property type="entry name" value="IMIDAZOLE GLYCEROL PHOSPHATE SYNTHASE SUBUNIT HISH"/>
    <property type="match status" value="1"/>
</dbReference>
<dbReference type="Pfam" id="PF00117">
    <property type="entry name" value="GATase"/>
    <property type="match status" value="1"/>
</dbReference>
<dbReference type="PIRSF" id="PIRSF000495">
    <property type="entry name" value="Amidotransf_hisH"/>
    <property type="match status" value="1"/>
</dbReference>
<dbReference type="SUPFAM" id="SSF52317">
    <property type="entry name" value="Class I glutamine amidotransferase-like"/>
    <property type="match status" value="1"/>
</dbReference>
<dbReference type="PROSITE" id="PS51273">
    <property type="entry name" value="GATASE_TYPE_1"/>
    <property type="match status" value="1"/>
</dbReference>
<name>HIS5_BACAC</name>
<organism>
    <name type="scientific">Bacillus anthracis (strain CDC 684 / NRRL 3495)</name>
    <dbReference type="NCBI Taxonomy" id="568206"/>
    <lineage>
        <taxon>Bacteria</taxon>
        <taxon>Bacillati</taxon>
        <taxon>Bacillota</taxon>
        <taxon>Bacilli</taxon>
        <taxon>Bacillales</taxon>
        <taxon>Bacillaceae</taxon>
        <taxon>Bacillus</taxon>
        <taxon>Bacillus cereus group</taxon>
    </lineage>
</organism>
<accession>C3L9P9</accession>
<gene>
    <name evidence="1" type="primary">hisH</name>
    <name type="ordered locus">BAMEG_3167</name>
</gene>
<proteinExistence type="inferred from homology"/>
<comment type="function">
    <text evidence="1">IGPS catalyzes the conversion of PRFAR and glutamine to IGP, AICAR and glutamate. The HisH subunit catalyzes the hydrolysis of glutamine to glutamate and ammonia as part of the synthesis of IGP and AICAR. The resulting ammonia molecule is channeled to the active site of HisF.</text>
</comment>
<comment type="catalytic activity">
    <reaction evidence="1">
        <text>5-[(5-phospho-1-deoxy-D-ribulos-1-ylimino)methylamino]-1-(5-phospho-beta-D-ribosyl)imidazole-4-carboxamide + L-glutamine = D-erythro-1-(imidazol-4-yl)glycerol 3-phosphate + 5-amino-1-(5-phospho-beta-D-ribosyl)imidazole-4-carboxamide + L-glutamate + H(+)</text>
        <dbReference type="Rhea" id="RHEA:24793"/>
        <dbReference type="ChEBI" id="CHEBI:15378"/>
        <dbReference type="ChEBI" id="CHEBI:29985"/>
        <dbReference type="ChEBI" id="CHEBI:58278"/>
        <dbReference type="ChEBI" id="CHEBI:58359"/>
        <dbReference type="ChEBI" id="CHEBI:58475"/>
        <dbReference type="ChEBI" id="CHEBI:58525"/>
        <dbReference type="EC" id="4.3.2.10"/>
    </reaction>
</comment>
<comment type="catalytic activity">
    <reaction evidence="1">
        <text>L-glutamine + H2O = L-glutamate + NH4(+)</text>
        <dbReference type="Rhea" id="RHEA:15889"/>
        <dbReference type="ChEBI" id="CHEBI:15377"/>
        <dbReference type="ChEBI" id="CHEBI:28938"/>
        <dbReference type="ChEBI" id="CHEBI:29985"/>
        <dbReference type="ChEBI" id="CHEBI:58359"/>
        <dbReference type="EC" id="3.5.1.2"/>
    </reaction>
</comment>
<comment type="pathway">
    <text evidence="1">Amino-acid biosynthesis; L-histidine biosynthesis; L-histidine from 5-phospho-alpha-D-ribose 1-diphosphate: step 5/9.</text>
</comment>
<comment type="subunit">
    <text evidence="1">Heterodimer of HisH and HisF.</text>
</comment>
<comment type="subcellular location">
    <subcellularLocation>
        <location evidence="1">Cytoplasm</location>
    </subcellularLocation>
</comment>
<protein>
    <recommendedName>
        <fullName evidence="1">Imidazole glycerol phosphate synthase subunit HisH</fullName>
        <ecNumber evidence="1">4.3.2.10</ecNumber>
    </recommendedName>
    <alternativeName>
        <fullName evidence="1">IGP synthase glutaminase subunit</fullName>
        <ecNumber evidence="1">3.5.1.2</ecNumber>
    </alternativeName>
    <alternativeName>
        <fullName evidence="1">IGP synthase subunit HisH</fullName>
    </alternativeName>
    <alternativeName>
        <fullName evidence="1">ImGP synthase subunit HisH</fullName>
        <shortName evidence="1">IGPS subunit HisH</shortName>
    </alternativeName>
</protein>
<sequence>MIAIIDYGMGNIRSVEQALKYIGAAYIVTSDKEEIFRSDGVILPGVGAFPKAMDILEEKDLVRMLQEIGRSRKPLLGICLGMQLLFEKSEELQDCNGLSLLPGVIRKLKVPYKIPHMGWNELKKEGEIALWNGVEDGSFVYYVHSYYADCPNEIVYGISDYGVKVPGFVAKGNIYGAQFHPEKSGDIGMQMLKNFKGVVETWKSSQLSI</sequence>
<feature type="chain" id="PRO_1000132533" description="Imidazole glycerol phosphate synthase subunit HisH">
    <location>
        <begin position="1"/>
        <end position="209"/>
    </location>
</feature>
<feature type="domain" description="Glutamine amidotransferase type-1" evidence="1">
    <location>
        <begin position="1"/>
        <end position="205"/>
    </location>
</feature>
<feature type="active site" description="Nucleophile" evidence="1">
    <location>
        <position position="79"/>
    </location>
</feature>
<feature type="active site" evidence="1">
    <location>
        <position position="180"/>
    </location>
</feature>
<feature type="active site" evidence="1">
    <location>
        <position position="182"/>
    </location>
</feature>
<keyword id="KW-0028">Amino-acid biosynthesis</keyword>
<keyword id="KW-0963">Cytoplasm</keyword>
<keyword id="KW-0315">Glutamine amidotransferase</keyword>
<keyword id="KW-0368">Histidine biosynthesis</keyword>
<keyword id="KW-0378">Hydrolase</keyword>
<keyword id="KW-0456">Lyase</keyword>